<proteinExistence type="inferred from homology"/>
<comment type="function">
    <text evidence="1">Catalyzes the formation of a hydroxyacyl-CoA by addition of water on enoyl-CoA. Also exhibits 3-hydroxyacyl-CoA epimerase and 3-hydroxyacyl-CoA dehydrogenase activities.</text>
</comment>
<comment type="catalytic activity">
    <reaction evidence="1">
        <text>a (3S)-3-hydroxyacyl-CoA = a (2E)-enoyl-CoA + H2O</text>
        <dbReference type="Rhea" id="RHEA:16105"/>
        <dbReference type="ChEBI" id="CHEBI:15377"/>
        <dbReference type="ChEBI" id="CHEBI:57318"/>
        <dbReference type="ChEBI" id="CHEBI:58856"/>
        <dbReference type="EC" id="4.2.1.17"/>
    </reaction>
</comment>
<comment type="catalytic activity">
    <reaction evidence="1">
        <text>a 4-saturated-(3S)-3-hydroxyacyl-CoA = a (3E)-enoyl-CoA + H2O</text>
        <dbReference type="Rhea" id="RHEA:20724"/>
        <dbReference type="ChEBI" id="CHEBI:15377"/>
        <dbReference type="ChEBI" id="CHEBI:58521"/>
        <dbReference type="ChEBI" id="CHEBI:137480"/>
        <dbReference type="EC" id="4.2.1.17"/>
    </reaction>
</comment>
<comment type="catalytic activity">
    <reaction evidence="1">
        <text>a (3S)-3-hydroxyacyl-CoA + NAD(+) = a 3-oxoacyl-CoA + NADH + H(+)</text>
        <dbReference type="Rhea" id="RHEA:22432"/>
        <dbReference type="ChEBI" id="CHEBI:15378"/>
        <dbReference type="ChEBI" id="CHEBI:57318"/>
        <dbReference type="ChEBI" id="CHEBI:57540"/>
        <dbReference type="ChEBI" id="CHEBI:57945"/>
        <dbReference type="ChEBI" id="CHEBI:90726"/>
        <dbReference type="EC" id="1.1.1.35"/>
    </reaction>
</comment>
<comment type="catalytic activity">
    <reaction evidence="1">
        <text>(3S)-3-hydroxybutanoyl-CoA = (3R)-3-hydroxybutanoyl-CoA</text>
        <dbReference type="Rhea" id="RHEA:21760"/>
        <dbReference type="ChEBI" id="CHEBI:57315"/>
        <dbReference type="ChEBI" id="CHEBI:57316"/>
        <dbReference type="EC" id="5.1.2.3"/>
    </reaction>
</comment>
<comment type="pathway">
    <text evidence="1">Lipid metabolism; fatty acid beta-oxidation.</text>
</comment>
<comment type="subunit">
    <text evidence="1">Heterotetramer of two alpha chains (FadJ) and two beta chains (FadI).</text>
</comment>
<comment type="subcellular location">
    <subcellularLocation>
        <location evidence="1">Cytoplasm</location>
    </subcellularLocation>
</comment>
<comment type="similarity">
    <text evidence="1">In the N-terminal section; belongs to the enoyl-CoA hydratase/isomerase family.</text>
</comment>
<comment type="similarity">
    <text evidence="1">In the central section; belongs to the 3-hydroxyacyl-CoA dehydrogenase family.</text>
</comment>
<accession>B7LBJ5</accession>
<organism>
    <name type="scientific">Escherichia coli (strain 55989 / EAEC)</name>
    <dbReference type="NCBI Taxonomy" id="585055"/>
    <lineage>
        <taxon>Bacteria</taxon>
        <taxon>Pseudomonadati</taxon>
        <taxon>Pseudomonadota</taxon>
        <taxon>Gammaproteobacteria</taxon>
        <taxon>Enterobacterales</taxon>
        <taxon>Enterobacteriaceae</taxon>
        <taxon>Escherichia</taxon>
    </lineage>
</organism>
<name>FADJ_ECO55</name>
<keyword id="KW-0963">Cytoplasm</keyword>
<keyword id="KW-0276">Fatty acid metabolism</keyword>
<keyword id="KW-0413">Isomerase</keyword>
<keyword id="KW-0442">Lipid degradation</keyword>
<keyword id="KW-0443">Lipid metabolism</keyword>
<keyword id="KW-0456">Lyase</keyword>
<keyword id="KW-0511">Multifunctional enzyme</keyword>
<keyword id="KW-0520">NAD</keyword>
<keyword id="KW-0560">Oxidoreductase</keyword>
<keyword id="KW-1185">Reference proteome</keyword>
<protein>
    <recommendedName>
        <fullName evidence="1">Fatty acid oxidation complex subunit alpha</fullName>
    </recommendedName>
    <domain>
        <recommendedName>
            <fullName evidence="1">Enoyl-CoA hydratase/3-hydroxybutyryl-CoA epimerase</fullName>
            <ecNumber evidence="1">4.2.1.17</ecNumber>
            <ecNumber evidence="1">5.1.2.3</ecNumber>
        </recommendedName>
    </domain>
    <domain>
        <recommendedName>
            <fullName evidence="1">3-hydroxyacyl-CoA dehydrogenase</fullName>
            <ecNumber evidence="1">1.1.1.35</ecNumber>
        </recommendedName>
    </domain>
</protein>
<reference key="1">
    <citation type="journal article" date="2009" name="PLoS Genet.">
        <title>Organised genome dynamics in the Escherichia coli species results in highly diverse adaptive paths.</title>
        <authorList>
            <person name="Touchon M."/>
            <person name="Hoede C."/>
            <person name="Tenaillon O."/>
            <person name="Barbe V."/>
            <person name="Baeriswyl S."/>
            <person name="Bidet P."/>
            <person name="Bingen E."/>
            <person name="Bonacorsi S."/>
            <person name="Bouchier C."/>
            <person name="Bouvet O."/>
            <person name="Calteau A."/>
            <person name="Chiapello H."/>
            <person name="Clermont O."/>
            <person name="Cruveiller S."/>
            <person name="Danchin A."/>
            <person name="Diard M."/>
            <person name="Dossat C."/>
            <person name="Karoui M.E."/>
            <person name="Frapy E."/>
            <person name="Garry L."/>
            <person name="Ghigo J.M."/>
            <person name="Gilles A.M."/>
            <person name="Johnson J."/>
            <person name="Le Bouguenec C."/>
            <person name="Lescat M."/>
            <person name="Mangenot S."/>
            <person name="Martinez-Jehanne V."/>
            <person name="Matic I."/>
            <person name="Nassif X."/>
            <person name="Oztas S."/>
            <person name="Petit M.A."/>
            <person name="Pichon C."/>
            <person name="Rouy Z."/>
            <person name="Ruf C.S."/>
            <person name="Schneider D."/>
            <person name="Tourret J."/>
            <person name="Vacherie B."/>
            <person name="Vallenet D."/>
            <person name="Medigue C."/>
            <person name="Rocha E.P.C."/>
            <person name="Denamur E."/>
        </authorList>
    </citation>
    <scope>NUCLEOTIDE SEQUENCE [LARGE SCALE GENOMIC DNA]</scope>
    <source>
        <strain>55989 / EAEC</strain>
    </source>
</reference>
<gene>
    <name evidence="1" type="primary">fadJ</name>
    <name type="ordered locus">EC55989_2585</name>
</gene>
<dbReference type="EC" id="4.2.1.17" evidence="1"/>
<dbReference type="EC" id="5.1.2.3" evidence="1"/>
<dbReference type="EC" id="1.1.1.35" evidence="1"/>
<dbReference type="EMBL" id="CU928145">
    <property type="protein sequence ID" value="CAU98453.1"/>
    <property type="molecule type" value="Genomic_DNA"/>
</dbReference>
<dbReference type="RefSeq" id="WP_000426166.1">
    <property type="nucleotide sequence ID" value="NC_011748.1"/>
</dbReference>
<dbReference type="SMR" id="B7LBJ5"/>
<dbReference type="KEGG" id="eck:EC55989_2585"/>
<dbReference type="HOGENOM" id="CLU_009834_16_1_6"/>
<dbReference type="UniPathway" id="UPA00659"/>
<dbReference type="Proteomes" id="UP000000746">
    <property type="component" value="Chromosome"/>
</dbReference>
<dbReference type="GO" id="GO:0005737">
    <property type="term" value="C:cytoplasm"/>
    <property type="evidence" value="ECO:0007669"/>
    <property type="project" value="UniProtKB-SubCell"/>
</dbReference>
<dbReference type="GO" id="GO:0008692">
    <property type="term" value="F:3-hydroxybutyryl-CoA epimerase activity"/>
    <property type="evidence" value="ECO:0007669"/>
    <property type="project" value="UniProtKB-UniRule"/>
</dbReference>
<dbReference type="GO" id="GO:0004300">
    <property type="term" value="F:enoyl-CoA hydratase activity"/>
    <property type="evidence" value="ECO:0007669"/>
    <property type="project" value="UniProtKB-UniRule"/>
</dbReference>
<dbReference type="GO" id="GO:0016509">
    <property type="term" value="F:long-chain-3-hydroxyacyl-CoA dehydrogenase activity"/>
    <property type="evidence" value="ECO:0007669"/>
    <property type="project" value="TreeGrafter"/>
</dbReference>
<dbReference type="GO" id="GO:0070403">
    <property type="term" value="F:NAD+ binding"/>
    <property type="evidence" value="ECO:0007669"/>
    <property type="project" value="InterPro"/>
</dbReference>
<dbReference type="GO" id="GO:0006635">
    <property type="term" value="P:fatty acid beta-oxidation"/>
    <property type="evidence" value="ECO:0007669"/>
    <property type="project" value="UniProtKB-UniRule"/>
</dbReference>
<dbReference type="CDD" id="cd06558">
    <property type="entry name" value="crotonase-like"/>
    <property type="match status" value="1"/>
</dbReference>
<dbReference type="FunFam" id="1.10.1040.50:FF:000003">
    <property type="entry name" value="Fatty acid oxidation complex subunit alpha"/>
    <property type="match status" value="1"/>
</dbReference>
<dbReference type="FunFam" id="3.90.226.10:FF:000011">
    <property type="entry name" value="Fatty acid oxidation complex subunit alpha"/>
    <property type="match status" value="1"/>
</dbReference>
<dbReference type="FunFam" id="3.40.50.720:FF:000009">
    <property type="entry name" value="Fatty oxidation complex, alpha subunit"/>
    <property type="match status" value="1"/>
</dbReference>
<dbReference type="Gene3D" id="1.10.1040.50">
    <property type="match status" value="1"/>
</dbReference>
<dbReference type="Gene3D" id="3.90.226.10">
    <property type="entry name" value="2-enoyl-CoA Hydratase, Chain A, domain 1"/>
    <property type="match status" value="1"/>
</dbReference>
<dbReference type="Gene3D" id="3.40.50.720">
    <property type="entry name" value="NAD(P)-binding Rossmann-like Domain"/>
    <property type="match status" value="1"/>
</dbReference>
<dbReference type="HAMAP" id="MF_01617">
    <property type="entry name" value="FadJ"/>
    <property type="match status" value="1"/>
</dbReference>
<dbReference type="InterPro" id="IPR006180">
    <property type="entry name" value="3-OHacyl-CoA_DH_CS"/>
</dbReference>
<dbReference type="InterPro" id="IPR006176">
    <property type="entry name" value="3-OHacyl-CoA_DH_NAD-bd"/>
</dbReference>
<dbReference type="InterPro" id="IPR006108">
    <property type="entry name" value="3HC_DH_C"/>
</dbReference>
<dbReference type="InterPro" id="IPR008927">
    <property type="entry name" value="6-PGluconate_DH-like_C_sf"/>
</dbReference>
<dbReference type="InterPro" id="IPR029045">
    <property type="entry name" value="ClpP/crotonase-like_dom_sf"/>
</dbReference>
<dbReference type="InterPro" id="IPR001753">
    <property type="entry name" value="Enoyl-CoA_hydra/iso"/>
</dbReference>
<dbReference type="InterPro" id="IPR050136">
    <property type="entry name" value="FA_oxidation_alpha_subunit"/>
</dbReference>
<dbReference type="InterPro" id="IPR012802">
    <property type="entry name" value="FadJ"/>
</dbReference>
<dbReference type="InterPro" id="IPR036291">
    <property type="entry name" value="NAD(P)-bd_dom_sf"/>
</dbReference>
<dbReference type="NCBIfam" id="TIGR02440">
    <property type="entry name" value="FadJ"/>
    <property type="match status" value="1"/>
</dbReference>
<dbReference type="NCBIfam" id="NF008363">
    <property type="entry name" value="PRK11154.1"/>
    <property type="match status" value="1"/>
</dbReference>
<dbReference type="PANTHER" id="PTHR43612">
    <property type="entry name" value="TRIFUNCTIONAL ENZYME SUBUNIT ALPHA"/>
    <property type="match status" value="1"/>
</dbReference>
<dbReference type="PANTHER" id="PTHR43612:SF3">
    <property type="entry name" value="TRIFUNCTIONAL ENZYME SUBUNIT ALPHA, MITOCHONDRIAL"/>
    <property type="match status" value="1"/>
</dbReference>
<dbReference type="Pfam" id="PF00725">
    <property type="entry name" value="3HCDH"/>
    <property type="match status" value="2"/>
</dbReference>
<dbReference type="Pfam" id="PF02737">
    <property type="entry name" value="3HCDH_N"/>
    <property type="match status" value="1"/>
</dbReference>
<dbReference type="Pfam" id="PF00378">
    <property type="entry name" value="ECH_1"/>
    <property type="match status" value="1"/>
</dbReference>
<dbReference type="SUPFAM" id="SSF48179">
    <property type="entry name" value="6-phosphogluconate dehydrogenase C-terminal domain-like"/>
    <property type="match status" value="2"/>
</dbReference>
<dbReference type="SUPFAM" id="SSF52096">
    <property type="entry name" value="ClpP/crotonase"/>
    <property type="match status" value="1"/>
</dbReference>
<dbReference type="SUPFAM" id="SSF51735">
    <property type="entry name" value="NAD(P)-binding Rossmann-fold domains"/>
    <property type="match status" value="1"/>
</dbReference>
<dbReference type="PROSITE" id="PS00067">
    <property type="entry name" value="3HCDH"/>
    <property type="match status" value="1"/>
</dbReference>
<evidence type="ECO:0000255" key="1">
    <source>
        <dbReference type="HAMAP-Rule" id="MF_01617"/>
    </source>
</evidence>
<sequence>MEMTSAFTLNVRLDNIAVITIDVPGEKMNTLKAEFASQVRAIIKQLRENKELRGVVFVSAKPDNFIAGADINMIGNCKTAQEAEALARQGQQLMAEIHALPIPVIAAIHGACLGGGLELALACHGRVCTDDPKTVLGLPEVQLGLLPGSGGTQRLPRLIGVSTALEMILTGKQLRAKQALKLGLVDDVVPHSILLEVAVELAKKDRPSSRPLPVRERILAGPLGRALLFKMVGKKTEHKTQGNYPATERILEVVETGLAQGTSSGYDAEARAFGELAMTPQSQALRSIFFASTDVKKDPGSDAPPAPLNSVGILGGGLMGGGIAYVTACKVGLPVRIKDINPQGINHALKYSWDQLEGKVRRRHLKASERDKQLALISGTTDYRGFAHRDLIIEAVFENLELKQQMVAEVEQNSAAHTIFASNTSSLPIGDIAAHATRPEQVIGLHFFSPVEKMPLVEIIPHAGTSAQTIATTVKLAKKQGKTPIVVRDKAGFYVNRILAPYINEAIRMLTEGERVEHIDAVLVKFGFPVGPIQLLDEVGIDTGTKIIPVLEAAYGERFSAPANVVSSILNDDRKGRKNGRGFYLYGQKGRKSKKQVDPAIYPLIGAQGQGRLSAPQVAERCVMLMLNEAVRCVDEQVIRSVRDGDIGAVFGIGFPPFLGGPFRYIDSLGAGEVVAIMQRLATQYGSRFTPCERLVEMGARGESFWKTTATDLQ</sequence>
<feature type="chain" id="PRO_1000185936" description="Fatty acid oxidation complex subunit alpha">
    <location>
        <begin position="1"/>
        <end position="714"/>
    </location>
</feature>
<feature type="region of interest" description="Enoyl-CoA hydratase" evidence="1">
    <location>
        <begin position="1"/>
        <end position="190"/>
    </location>
</feature>
<feature type="region of interest" description="3-hydroxyacyl-CoA dehydrogenase" evidence="1">
    <location>
        <begin position="306"/>
        <end position="714"/>
    </location>
</feature>
<feature type="site" description="Important for catalytic activity" evidence="1">
    <location>
        <position position="118"/>
    </location>
</feature>
<feature type="site" description="Important for catalytic activity" evidence="1">
    <location>
        <position position="140"/>
    </location>
</feature>